<protein>
    <recommendedName>
        <fullName evidence="1">Na(+)/H(+) antiporter NhaB</fullName>
    </recommendedName>
    <alternativeName>
        <fullName evidence="1">Sodium/proton antiporter NhaB</fullName>
    </alternativeName>
</protein>
<organism>
    <name type="scientific">Yersinia pseudotuberculosis serotype O:3 (strain YPIII)</name>
    <dbReference type="NCBI Taxonomy" id="502800"/>
    <lineage>
        <taxon>Bacteria</taxon>
        <taxon>Pseudomonadati</taxon>
        <taxon>Pseudomonadota</taxon>
        <taxon>Gammaproteobacteria</taxon>
        <taxon>Enterobacterales</taxon>
        <taxon>Yersiniaceae</taxon>
        <taxon>Yersinia</taxon>
    </lineage>
</organism>
<accession>B1JLH7</accession>
<feature type="chain" id="PRO_1000148058" description="Na(+)/H(+) antiporter NhaB">
    <location>
        <begin position="1"/>
        <end position="524"/>
    </location>
</feature>
<feature type="transmembrane region" description="Helical" evidence="1">
    <location>
        <begin position="13"/>
        <end position="33"/>
    </location>
</feature>
<feature type="transmembrane region" description="Helical" evidence="1">
    <location>
        <begin position="98"/>
        <end position="118"/>
    </location>
</feature>
<feature type="transmembrane region" description="Helical" evidence="1">
    <location>
        <begin position="140"/>
        <end position="160"/>
    </location>
</feature>
<feature type="transmembrane region" description="Helical" evidence="1">
    <location>
        <begin position="239"/>
        <end position="259"/>
    </location>
</feature>
<feature type="transmembrane region" description="Helical" evidence="1">
    <location>
        <begin position="304"/>
        <end position="324"/>
    </location>
</feature>
<feature type="transmembrane region" description="Helical" evidence="1">
    <location>
        <begin position="325"/>
        <end position="345"/>
    </location>
</feature>
<feature type="transmembrane region" description="Helical" evidence="1">
    <location>
        <begin position="358"/>
        <end position="378"/>
    </location>
</feature>
<feature type="transmembrane region" description="Helical" evidence="1">
    <location>
        <begin position="448"/>
        <end position="468"/>
    </location>
</feature>
<feature type="transmembrane region" description="Helical" evidence="1">
    <location>
        <begin position="479"/>
        <end position="499"/>
    </location>
</feature>
<evidence type="ECO:0000255" key="1">
    <source>
        <dbReference type="HAMAP-Rule" id="MF_01599"/>
    </source>
</evidence>
<sequence>MDITNRQAVLKNFLGNSPDWYKLAIMGFLIINPLVFFFVSPFVAGWMLVIEFIFTLAMALKCYPLQPGGLLAIQAVAIGMTSPHQVAEEIANNLEVLLLLVFMVAGIYFMKQLLLFVFTKLLLNIRSKTILSLAFCLASAFLSAFLDALTVIAVVISVSVGFYTIYHNVTSNHSDKDITDDSGIDNQDSHETLEQFRAFLRSLMMHAGVGTALGGVMTMVGEPQNLIIAKSAGWNFADFFIRMLPVTLPVFICGLLVCLLVEKFKLFGYGAQLPERVRQVLTEYDQQASAKRTKQEKMKLIVQAIIGVWLVLALALHLAEVGLVGLSVIILATSFCGITNEHSLGKAFQEALPFTALLTVFFAVVAVIIEQSLFTPIIQFVLQASPSAQLSLFYLFNGLLSSVSDNVFVGTVYINEARSAFEHGIVSLQQFELLAVAINTGTNLPSVATPNGQAAFLFLLTSALAPLIRLSYGRMVYMALPYTLVMTIVGLLGVEFLLVPMTEWLTQAGWISLPHITNGVAIPH</sequence>
<keyword id="KW-0050">Antiport</keyword>
<keyword id="KW-0997">Cell inner membrane</keyword>
<keyword id="KW-1003">Cell membrane</keyword>
<keyword id="KW-0406">Ion transport</keyword>
<keyword id="KW-0472">Membrane</keyword>
<keyword id="KW-0915">Sodium</keyword>
<keyword id="KW-0739">Sodium transport</keyword>
<keyword id="KW-0812">Transmembrane</keyword>
<keyword id="KW-1133">Transmembrane helix</keyword>
<keyword id="KW-0813">Transport</keyword>
<name>NHAB_YERPY</name>
<proteinExistence type="inferred from homology"/>
<dbReference type="EMBL" id="CP000950">
    <property type="protein sequence ID" value="ACA68396.1"/>
    <property type="molecule type" value="Genomic_DNA"/>
</dbReference>
<dbReference type="RefSeq" id="WP_012304099.1">
    <property type="nucleotide sequence ID" value="NZ_CP009792.1"/>
</dbReference>
<dbReference type="SMR" id="B1JLH7"/>
<dbReference type="KEGG" id="ypy:YPK_2110"/>
<dbReference type="PATRIC" id="fig|502800.11.peg.2785"/>
<dbReference type="GO" id="GO:0005886">
    <property type="term" value="C:plasma membrane"/>
    <property type="evidence" value="ECO:0007669"/>
    <property type="project" value="UniProtKB-SubCell"/>
</dbReference>
<dbReference type="GO" id="GO:0015385">
    <property type="term" value="F:sodium:proton antiporter activity"/>
    <property type="evidence" value="ECO:0007669"/>
    <property type="project" value="InterPro"/>
</dbReference>
<dbReference type="HAMAP" id="MF_01599">
    <property type="entry name" value="NhaB"/>
    <property type="match status" value="1"/>
</dbReference>
<dbReference type="InterPro" id="IPR004671">
    <property type="entry name" value="Na+/H+_antiporter_NhaB"/>
</dbReference>
<dbReference type="NCBIfam" id="TIGR00774">
    <property type="entry name" value="NhaB"/>
    <property type="match status" value="1"/>
</dbReference>
<dbReference type="NCBIfam" id="NF007093">
    <property type="entry name" value="PRK09547.1"/>
    <property type="match status" value="1"/>
</dbReference>
<dbReference type="PANTHER" id="PTHR43302:SF1">
    <property type="entry name" value="NA(+)_H(+) ANTIPORTER NHAB"/>
    <property type="match status" value="1"/>
</dbReference>
<dbReference type="PANTHER" id="PTHR43302">
    <property type="entry name" value="TRANSPORTER ARSB-RELATED"/>
    <property type="match status" value="1"/>
</dbReference>
<dbReference type="Pfam" id="PF06450">
    <property type="entry name" value="NhaB"/>
    <property type="match status" value="1"/>
</dbReference>
<gene>
    <name evidence="1" type="primary">nhaB</name>
    <name type="ordered locus">YPK_2110</name>
</gene>
<comment type="function">
    <text evidence="1">Na(+)/H(+) antiporter that extrudes sodium in exchange for external protons.</text>
</comment>
<comment type="catalytic activity">
    <reaction evidence="1">
        <text>2 Na(+)(in) + 3 H(+)(out) = 2 Na(+)(out) + 3 H(+)(in)</text>
        <dbReference type="Rhea" id="RHEA:29247"/>
        <dbReference type="ChEBI" id="CHEBI:15378"/>
        <dbReference type="ChEBI" id="CHEBI:29101"/>
    </reaction>
    <physiologicalReaction direction="left-to-right" evidence="1">
        <dbReference type="Rhea" id="RHEA:29248"/>
    </physiologicalReaction>
</comment>
<comment type="subcellular location">
    <subcellularLocation>
        <location evidence="1">Cell inner membrane</location>
        <topology evidence="1">Multi-pass membrane protein</topology>
    </subcellularLocation>
</comment>
<comment type="similarity">
    <text evidence="1">Belongs to the NhaB Na(+)/H(+) (TC 2.A.34) antiporter family.</text>
</comment>
<reference key="1">
    <citation type="submission" date="2008-02" db="EMBL/GenBank/DDBJ databases">
        <title>Complete sequence of Yersinia pseudotuberculosis YPIII.</title>
        <authorList>
            <consortium name="US DOE Joint Genome Institute"/>
            <person name="Copeland A."/>
            <person name="Lucas S."/>
            <person name="Lapidus A."/>
            <person name="Glavina del Rio T."/>
            <person name="Dalin E."/>
            <person name="Tice H."/>
            <person name="Bruce D."/>
            <person name="Goodwin L."/>
            <person name="Pitluck S."/>
            <person name="Munk A.C."/>
            <person name="Brettin T."/>
            <person name="Detter J.C."/>
            <person name="Han C."/>
            <person name="Tapia R."/>
            <person name="Schmutz J."/>
            <person name="Larimer F."/>
            <person name="Land M."/>
            <person name="Hauser L."/>
            <person name="Challacombe J.F."/>
            <person name="Green L."/>
            <person name="Lindler L.E."/>
            <person name="Nikolich M.P."/>
            <person name="Richardson P."/>
        </authorList>
    </citation>
    <scope>NUCLEOTIDE SEQUENCE [LARGE SCALE GENOMIC DNA]</scope>
    <source>
        <strain>YPIII</strain>
    </source>
</reference>